<protein>
    <recommendedName>
        <fullName>Rho-related GTP-binding protein RhoB</fullName>
    </recommendedName>
    <alternativeName>
        <fullName>Rho cDNA clone 6</fullName>
        <shortName>h6</shortName>
    </alternativeName>
</protein>
<accession>P62745</accession>
<accession>B2R692</accession>
<accession>P01121</accession>
<accession>Q5U0H6</accession>
<accession>Q7RTN5</accession>
<accession>Q7RTR9</accession>
<accession>Q9CUV7</accession>
<proteinExistence type="evidence at protein level"/>
<sequence>MAAIRKKLVVVGDGACGKTCLLIVFSKDEFPEVYVPTVFENYVADIEVDGKQVELALWDTAGQEDYDRLRPLSYPDTDVILMCFSVDSPDSLENIPEKWVPEVKHFCPNVPIILVANKKDLRSDEHVRTELARMKQEPVRTDDGRAMAVRIQAYDYLECSAKTKEGVREVFETATRAALQKRYGSQNGCINCCKVL</sequence>
<gene>
    <name type="primary">RHOB</name>
    <name type="synonym">ARH6</name>
    <name type="synonym">ARHB</name>
</gene>
<comment type="function">
    <text evidence="5 9 10 11 16">Mediates apoptosis in neoplastically transformed cells after DNA damage. Not essential for development but affects cell adhesion and growth factor signaling in transformed cells. Plays a negative role in tumorigenesis as deletion causes tumor formation. Involved in intracellular protein trafficking of a number of proteins. Targets PKN1 to endosomes and is involved in trafficking of the EGF receptor from late endosomes to lysosomes. Also required for stability and nuclear trafficking of AKT1/AKT which promotes endothelial cell survival during vascular development. Serves as a microtubule-dependent signal that is required for the myosin contractile ring formation during cell cycle cytokinesis. Required for genotoxic stress-induced cell death in breast cancer cells.</text>
</comment>
<comment type="subunit">
    <text evidence="2 3 6 7 14 16">Binds ROCK1 and ROCK2 (By similarity). Also binds PKN1/PRK1 (PubMed:9478917). Interacts with ARGGEF3 (PubMed:12221096). Interacts with RTKN (By similarity). Interacts with AKAP13 (PubMed:11546812). Interacts with RIPOR1 (PubMed:27807006).</text>
</comment>
<comment type="interaction">
    <interactant intactId="EBI-602647">
        <id>P62745</id>
    </interactant>
    <interactant intactId="EBI-9845742">
        <id>Q9HCE7-2</id>
        <label>SMURF1</label>
    </interactant>
    <organismsDiffer>false</organismsDiffer>
    <experiments>3</experiments>
</comment>
<comment type="interaction">
    <interactant intactId="EBI-602647">
        <id>P62745</id>
    </interactant>
    <interactant intactId="EBI-2505861">
        <id>Q13829</id>
        <label>TNFAIP1</label>
    </interactant>
    <organismsDiffer>false</organismsDiffer>
    <experiments>5</experiments>
</comment>
<comment type="subcellular location">
    <subcellularLocation>
        <location>Late endosome membrane</location>
        <topology>Lipid-anchor</topology>
    </subcellularLocation>
    <subcellularLocation>
        <location>Cell membrane</location>
        <topology>Lipid-anchor</topology>
    </subcellularLocation>
    <subcellularLocation>
        <location>Nucleus</location>
    </subcellularLocation>
    <subcellularLocation>
        <location>Cleavage furrow</location>
    </subcellularLocation>
    <text>Late endosomal membrane (geranylgeranylated form). Plasma membrane (farnesylated form). Also detected at the nuclear margin and in the nucleus. Translocates to the equatorial region before furrow formation in a ECT2-dependent manner.</text>
</comment>
<comment type="induction">
    <text evidence="11">Up-regulated by DNA damaging agents like H(2)O(2) or ionizing radiation (IR).</text>
</comment>
<comment type="PTM">
    <text evidence="8 15">Prenylation specifies the subcellular location of RHOB. The farnesylated form is localized to the plasma membrane while the geranylgeranylated form is localized to the endosome.</text>
</comment>
<comment type="PTM">
    <text evidence="12">(Microbial infection) Glycosylated at Tyr-34 by Photorhabdus asymbiotica toxin PAU_02230. Mono-O-GlcNAcylation by PAU_02230 inhibits downstream signaling by an impaired interaction with diverse regulator and effector proteins of Rho and leads to actin disassembly.</text>
</comment>
<comment type="PTM">
    <text evidence="13">(Microbial infection) Glucosylated at Thr-37 by C.difficile toxins TcdA and TcdB in the colonic epithelium (PubMed:24905543). Monoglucosylation completely prevents the recognition of the downstream effector, blocking the GTPases in their inactive form, leading to actin cytoskeleton disruption (PubMed:24905543).</text>
</comment>
<comment type="miscellaneous">
    <text>RHOB is one of the targets of farnesyltransferase inhibitors which are currently under investigation as cancer therapeutics. These elevate the levels of geranylgeranylated RHOB and cause mislocalization, leading to apoptosis and antineoplastic effects.</text>
</comment>
<comment type="similarity">
    <text evidence="17">Belongs to the small GTPase superfamily. Rho family.</text>
</comment>
<comment type="online information" name="Atlas of Genetics and Cytogenetics in Oncology and Haematology">
    <link uri="https://atlasgeneticsoncology.org/gene/42108/RHOB"/>
</comment>
<keyword id="KW-0002">3D-structure</keyword>
<keyword id="KW-0013">ADP-ribosylation</keyword>
<keyword id="KW-0037">Angiogenesis</keyword>
<keyword id="KW-0053">Apoptosis</keyword>
<keyword id="KW-0130">Cell adhesion</keyword>
<keyword id="KW-1003">Cell membrane</keyword>
<keyword id="KW-0217">Developmental protein</keyword>
<keyword id="KW-0221">Differentiation</keyword>
<keyword id="KW-0903">Direct protein sequencing</keyword>
<keyword id="KW-0967">Endosome</keyword>
<keyword id="KW-0325">Glycoprotein</keyword>
<keyword id="KW-0342">GTP-binding</keyword>
<keyword id="KW-0449">Lipoprotein</keyword>
<keyword id="KW-0472">Membrane</keyword>
<keyword id="KW-0488">Methylation</keyword>
<keyword id="KW-0547">Nucleotide-binding</keyword>
<keyword id="KW-0539">Nucleus</keyword>
<keyword id="KW-0564">Palmitate</keyword>
<keyword id="KW-0597">Phosphoprotein</keyword>
<keyword id="KW-0636">Prenylation</keyword>
<keyword id="KW-0653">Protein transport</keyword>
<keyword id="KW-1267">Proteomics identification</keyword>
<keyword id="KW-1185">Reference proteome</keyword>
<keyword id="KW-0813">Transport</keyword>
<keyword id="KW-0043">Tumor suppressor</keyword>
<reference key="1">
    <citation type="journal article" date="1988" name="Nucleic Acids Res.">
        <title>Coding sequence of human rho cDNAs clone 6 and clone 9.</title>
        <authorList>
            <person name="Chardin P."/>
            <person name="Madaule P."/>
            <person name="Tavitian A."/>
        </authorList>
    </citation>
    <scope>NUCLEOTIDE SEQUENCE [MRNA]</scope>
</reference>
<reference key="2">
    <citation type="submission" date="2002-04" db="EMBL/GenBank/DDBJ databases">
        <title>cDNA clones of human proteins involved in signal transduction sequenced by the Guthrie cDNA resource center (www.cdna.org).</title>
        <authorList>
            <person name="Puhl H.L. III"/>
            <person name="Ikeda S.R."/>
            <person name="Aronstam R.S."/>
        </authorList>
    </citation>
    <scope>NUCLEOTIDE SEQUENCE [LARGE SCALE MRNA]</scope>
    <source>
        <tissue>Brain</tissue>
    </source>
</reference>
<reference key="3">
    <citation type="submission" date="2004-06" db="EMBL/GenBank/DDBJ databases">
        <title>Cloning of human full open reading frames in Gateway(TM) system entry vector (pDONR201).</title>
        <authorList>
            <person name="Halleck A."/>
            <person name="Ebert L."/>
            <person name="Mkoundinya M."/>
            <person name="Schick M."/>
            <person name="Eisenstein S."/>
            <person name="Neubert P."/>
            <person name="Kstrang K."/>
            <person name="Schatten R."/>
            <person name="Shen B."/>
            <person name="Henze S."/>
            <person name="Mar W."/>
            <person name="Korn B."/>
            <person name="Zuo D."/>
            <person name="Hu Y."/>
            <person name="LaBaer J."/>
        </authorList>
    </citation>
    <scope>NUCLEOTIDE SEQUENCE [LARGE SCALE MRNA]</scope>
</reference>
<reference key="4">
    <citation type="journal article" date="2004" name="Nat. Genet.">
        <title>Complete sequencing and characterization of 21,243 full-length human cDNAs.</title>
        <authorList>
            <person name="Ota T."/>
            <person name="Suzuki Y."/>
            <person name="Nishikawa T."/>
            <person name="Otsuki T."/>
            <person name="Sugiyama T."/>
            <person name="Irie R."/>
            <person name="Wakamatsu A."/>
            <person name="Hayashi K."/>
            <person name="Sato H."/>
            <person name="Nagai K."/>
            <person name="Kimura K."/>
            <person name="Makita H."/>
            <person name="Sekine M."/>
            <person name="Obayashi M."/>
            <person name="Nishi T."/>
            <person name="Shibahara T."/>
            <person name="Tanaka T."/>
            <person name="Ishii S."/>
            <person name="Yamamoto J."/>
            <person name="Saito K."/>
            <person name="Kawai Y."/>
            <person name="Isono Y."/>
            <person name="Nakamura Y."/>
            <person name="Nagahari K."/>
            <person name="Murakami K."/>
            <person name="Yasuda T."/>
            <person name="Iwayanagi T."/>
            <person name="Wagatsuma M."/>
            <person name="Shiratori A."/>
            <person name="Sudo H."/>
            <person name="Hosoiri T."/>
            <person name="Kaku Y."/>
            <person name="Kodaira H."/>
            <person name="Kondo H."/>
            <person name="Sugawara M."/>
            <person name="Takahashi M."/>
            <person name="Kanda K."/>
            <person name="Yokoi T."/>
            <person name="Furuya T."/>
            <person name="Kikkawa E."/>
            <person name="Omura Y."/>
            <person name="Abe K."/>
            <person name="Kamihara K."/>
            <person name="Katsuta N."/>
            <person name="Sato K."/>
            <person name="Tanikawa M."/>
            <person name="Yamazaki M."/>
            <person name="Ninomiya K."/>
            <person name="Ishibashi T."/>
            <person name="Yamashita H."/>
            <person name="Murakawa K."/>
            <person name="Fujimori K."/>
            <person name="Tanai H."/>
            <person name="Kimata M."/>
            <person name="Watanabe M."/>
            <person name="Hiraoka S."/>
            <person name="Chiba Y."/>
            <person name="Ishida S."/>
            <person name="Ono Y."/>
            <person name="Takiguchi S."/>
            <person name="Watanabe S."/>
            <person name="Yosida M."/>
            <person name="Hotuta T."/>
            <person name="Kusano J."/>
            <person name="Kanehori K."/>
            <person name="Takahashi-Fujii A."/>
            <person name="Hara H."/>
            <person name="Tanase T.-O."/>
            <person name="Nomura Y."/>
            <person name="Togiya S."/>
            <person name="Komai F."/>
            <person name="Hara R."/>
            <person name="Takeuchi K."/>
            <person name="Arita M."/>
            <person name="Imose N."/>
            <person name="Musashino K."/>
            <person name="Yuuki H."/>
            <person name="Oshima A."/>
            <person name="Sasaki N."/>
            <person name="Aotsuka S."/>
            <person name="Yoshikawa Y."/>
            <person name="Matsunawa H."/>
            <person name="Ichihara T."/>
            <person name="Shiohata N."/>
            <person name="Sano S."/>
            <person name="Moriya S."/>
            <person name="Momiyama H."/>
            <person name="Satoh N."/>
            <person name="Takami S."/>
            <person name="Terashima Y."/>
            <person name="Suzuki O."/>
            <person name="Nakagawa S."/>
            <person name="Senoh A."/>
            <person name="Mizoguchi H."/>
            <person name="Goto Y."/>
            <person name="Shimizu F."/>
            <person name="Wakebe H."/>
            <person name="Hishigaki H."/>
            <person name="Watanabe T."/>
            <person name="Sugiyama A."/>
            <person name="Takemoto M."/>
            <person name="Kawakami B."/>
            <person name="Yamazaki M."/>
            <person name="Watanabe K."/>
            <person name="Kumagai A."/>
            <person name="Itakura S."/>
            <person name="Fukuzumi Y."/>
            <person name="Fujimori Y."/>
            <person name="Komiyama M."/>
            <person name="Tashiro H."/>
            <person name="Tanigami A."/>
            <person name="Fujiwara T."/>
            <person name="Ono T."/>
            <person name="Yamada K."/>
            <person name="Fujii Y."/>
            <person name="Ozaki K."/>
            <person name="Hirao M."/>
            <person name="Ohmori Y."/>
            <person name="Kawabata A."/>
            <person name="Hikiji T."/>
            <person name="Kobatake N."/>
            <person name="Inagaki H."/>
            <person name="Ikema Y."/>
            <person name="Okamoto S."/>
            <person name="Okitani R."/>
            <person name="Kawakami T."/>
            <person name="Noguchi S."/>
            <person name="Itoh T."/>
            <person name="Shigeta K."/>
            <person name="Senba T."/>
            <person name="Matsumura K."/>
            <person name="Nakajima Y."/>
            <person name="Mizuno T."/>
            <person name="Morinaga M."/>
            <person name="Sasaki M."/>
            <person name="Togashi T."/>
            <person name="Oyama M."/>
            <person name="Hata H."/>
            <person name="Watanabe M."/>
            <person name="Komatsu T."/>
            <person name="Mizushima-Sugano J."/>
            <person name="Satoh T."/>
            <person name="Shirai Y."/>
            <person name="Takahashi Y."/>
            <person name="Nakagawa K."/>
            <person name="Okumura K."/>
            <person name="Nagase T."/>
            <person name="Nomura N."/>
            <person name="Kikuchi H."/>
            <person name="Masuho Y."/>
            <person name="Yamashita R."/>
            <person name="Nakai K."/>
            <person name="Yada T."/>
            <person name="Nakamura Y."/>
            <person name="Ohara O."/>
            <person name="Isogai T."/>
            <person name="Sugano S."/>
        </authorList>
    </citation>
    <scope>NUCLEOTIDE SEQUENCE [LARGE SCALE MRNA]</scope>
    <source>
        <tissue>Hippocampus</tissue>
    </source>
</reference>
<reference key="5">
    <citation type="submission" date="2004-10" db="EMBL/GenBank/DDBJ databases">
        <title>Cloning of human full-length CDSs in BD Creator(TM) system donor vector.</title>
        <authorList>
            <person name="Kalnine N."/>
            <person name="Chen X."/>
            <person name="Rolfs A."/>
            <person name="Halleck A."/>
            <person name="Hines L."/>
            <person name="Eisenstein S."/>
            <person name="Koundinya M."/>
            <person name="Raphael J."/>
            <person name="Moreira D."/>
            <person name="Kelley T."/>
            <person name="LaBaer J."/>
            <person name="Lin Y."/>
            <person name="Phelan M."/>
            <person name="Farmer A."/>
        </authorList>
    </citation>
    <scope>NUCLEOTIDE SEQUENCE [LARGE SCALE MRNA]</scope>
</reference>
<reference key="6">
    <citation type="journal article" date="2005" name="Nature">
        <title>Generation and annotation of the DNA sequences of human chromosomes 2 and 4.</title>
        <authorList>
            <person name="Hillier L.W."/>
            <person name="Graves T.A."/>
            <person name="Fulton R.S."/>
            <person name="Fulton L.A."/>
            <person name="Pepin K.H."/>
            <person name="Minx P."/>
            <person name="Wagner-McPherson C."/>
            <person name="Layman D."/>
            <person name="Wylie K."/>
            <person name="Sekhon M."/>
            <person name="Becker M.C."/>
            <person name="Fewell G.A."/>
            <person name="Delehaunty K.D."/>
            <person name="Miner T.L."/>
            <person name="Nash W.E."/>
            <person name="Kremitzki C."/>
            <person name="Oddy L."/>
            <person name="Du H."/>
            <person name="Sun H."/>
            <person name="Bradshaw-Cordum H."/>
            <person name="Ali J."/>
            <person name="Carter J."/>
            <person name="Cordes M."/>
            <person name="Harris A."/>
            <person name="Isak A."/>
            <person name="van Brunt A."/>
            <person name="Nguyen C."/>
            <person name="Du F."/>
            <person name="Courtney L."/>
            <person name="Kalicki J."/>
            <person name="Ozersky P."/>
            <person name="Abbott S."/>
            <person name="Armstrong J."/>
            <person name="Belter E.A."/>
            <person name="Caruso L."/>
            <person name="Cedroni M."/>
            <person name="Cotton M."/>
            <person name="Davidson T."/>
            <person name="Desai A."/>
            <person name="Elliott G."/>
            <person name="Erb T."/>
            <person name="Fronick C."/>
            <person name="Gaige T."/>
            <person name="Haakenson W."/>
            <person name="Haglund K."/>
            <person name="Holmes A."/>
            <person name="Harkins R."/>
            <person name="Kim K."/>
            <person name="Kruchowski S.S."/>
            <person name="Strong C.M."/>
            <person name="Grewal N."/>
            <person name="Goyea E."/>
            <person name="Hou S."/>
            <person name="Levy A."/>
            <person name="Martinka S."/>
            <person name="Mead K."/>
            <person name="McLellan M.D."/>
            <person name="Meyer R."/>
            <person name="Randall-Maher J."/>
            <person name="Tomlinson C."/>
            <person name="Dauphin-Kohlberg S."/>
            <person name="Kozlowicz-Reilly A."/>
            <person name="Shah N."/>
            <person name="Swearengen-Shahid S."/>
            <person name="Snider J."/>
            <person name="Strong J.T."/>
            <person name="Thompson J."/>
            <person name="Yoakum M."/>
            <person name="Leonard S."/>
            <person name="Pearman C."/>
            <person name="Trani L."/>
            <person name="Radionenko M."/>
            <person name="Waligorski J.E."/>
            <person name="Wang C."/>
            <person name="Rock S.M."/>
            <person name="Tin-Wollam A.-M."/>
            <person name="Maupin R."/>
            <person name="Latreille P."/>
            <person name="Wendl M.C."/>
            <person name="Yang S.-P."/>
            <person name="Pohl C."/>
            <person name="Wallis J.W."/>
            <person name="Spieth J."/>
            <person name="Bieri T.A."/>
            <person name="Berkowicz N."/>
            <person name="Nelson J.O."/>
            <person name="Osborne J."/>
            <person name="Ding L."/>
            <person name="Meyer R."/>
            <person name="Sabo A."/>
            <person name="Shotland Y."/>
            <person name="Sinha P."/>
            <person name="Wohldmann P.E."/>
            <person name="Cook L.L."/>
            <person name="Hickenbotham M.T."/>
            <person name="Eldred J."/>
            <person name="Williams D."/>
            <person name="Jones T.A."/>
            <person name="She X."/>
            <person name="Ciccarelli F.D."/>
            <person name="Izaurralde E."/>
            <person name="Taylor J."/>
            <person name="Schmutz J."/>
            <person name="Myers R.M."/>
            <person name="Cox D.R."/>
            <person name="Huang X."/>
            <person name="McPherson J.D."/>
            <person name="Mardis E.R."/>
            <person name="Clifton S.W."/>
            <person name="Warren W.C."/>
            <person name="Chinwalla A.T."/>
            <person name="Eddy S.R."/>
            <person name="Marra M.A."/>
            <person name="Ovcharenko I."/>
            <person name="Furey T.S."/>
            <person name="Miller W."/>
            <person name="Eichler E.E."/>
            <person name="Bork P."/>
            <person name="Suyama M."/>
            <person name="Torrents D."/>
            <person name="Waterston R.H."/>
            <person name="Wilson R.K."/>
        </authorList>
    </citation>
    <scope>NUCLEOTIDE SEQUENCE [LARGE SCALE GENOMIC DNA]</scope>
</reference>
<reference key="7">
    <citation type="submission" date="2005-09" db="EMBL/GenBank/DDBJ databases">
        <authorList>
            <person name="Mural R.J."/>
            <person name="Istrail S."/>
            <person name="Sutton G."/>
            <person name="Florea L."/>
            <person name="Halpern A.L."/>
            <person name="Mobarry C.M."/>
            <person name="Lippert R."/>
            <person name="Walenz B."/>
            <person name="Shatkay H."/>
            <person name="Dew I."/>
            <person name="Miller J.R."/>
            <person name="Flanigan M.J."/>
            <person name="Edwards N.J."/>
            <person name="Bolanos R."/>
            <person name="Fasulo D."/>
            <person name="Halldorsson B.V."/>
            <person name="Hannenhalli S."/>
            <person name="Turner R."/>
            <person name="Yooseph S."/>
            <person name="Lu F."/>
            <person name="Nusskern D.R."/>
            <person name="Shue B.C."/>
            <person name="Zheng X.H."/>
            <person name="Zhong F."/>
            <person name="Delcher A.L."/>
            <person name="Huson D.H."/>
            <person name="Kravitz S.A."/>
            <person name="Mouchard L."/>
            <person name="Reinert K."/>
            <person name="Remington K.A."/>
            <person name="Clark A.G."/>
            <person name="Waterman M.S."/>
            <person name="Eichler E.E."/>
            <person name="Adams M.D."/>
            <person name="Hunkapiller M.W."/>
            <person name="Myers E.W."/>
            <person name="Venter J.C."/>
        </authorList>
    </citation>
    <scope>NUCLEOTIDE SEQUENCE [LARGE SCALE GENOMIC DNA]</scope>
</reference>
<reference key="8">
    <citation type="journal article" date="2004" name="Genome Res.">
        <title>The status, quality, and expansion of the NIH full-length cDNA project: the Mammalian Gene Collection (MGC).</title>
        <authorList>
            <consortium name="The MGC Project Team"/>
        </authorList>
    </citation>
    <scope>NUCLEOTIDE SEQUENCE [LARGE SCALE MRNA]</scope>
    <source>
        <tissue>Brain</tissue>
    </source>
</reference>
<reference key="9">
    <citation type="submission" date="2008-12" db="UniProtKB">
        <authorList>
            <person name="Lubec G."/>
            <person name="Chen W.-Q."/>
            <person name="Sun Y."/>
        </authorList>
    </citation>
    <scope>PROTEIN SEQUENCE OF 8-27; 52-68; 105-118 AND 151-162</scope>
    <scope>IDENTIFICATION BY MASS SPECTROMETRY</scope>
    <source>
        <tissue>Fetal brain cortex</tissue>
    </source>
</reference>
<reference key="10">
    <citation type="journal article" date="1985" name="Cell">
        <title>A novel ras-related gene family.</title>
        <authorList>
            <person name="Madaule P."/>
            <person name="Axel R."/>
        </authorList>
    </citation>
    <scope>NUCLEOTIDE SEQUENCE [MRNA] OF 29-196</scope>
</reference>
<reference key="11">
    <citation type="journal article" date="1998" name="J. Biol. Chem.">
        <title>PRK1 is targeted to endosomes by the small GTPase, RhoB.</title>
        <authorList>
            <person name="Mellor H."/>
            <person name="Flynn P."/>
            <person name="Nobes C.D."/>
            <person name="Hall A."/>
            <person name="Parker P.J."/>
        </authorList>
    </citation>
    <scope>FUNCTION</scope>
    <scope>INTERACTION WITH PKN1</scope>
</reference>
<reference key="12">
    <citation type="journal article" date="1999" name="Curr. Biol.">
        <title>Regulation of epidermal growth factor receptor traffic by the small GTPase rhoB.</title>
        <authorList>
            <person name="Gampel A."/>
            <person name="Parker P.J."/>
            <person name="Mellor H."/>
        </authorList>
    </citation>
    <scope>FUNCTION</scope>
    <scope>MUTAGENESIS OF PHE-39</scope>
</reference>
<reference key="13">
    <citation type="journal article" date="2004" name="J. Cell Sci.">
        <title>Farnesyltransferase inhibitors disrupt EGF receptor traffic through modulation of the RhoB GTPase.</title>
        <authorList>
            <person name="Wherlock M."/>
            <person name="Gampel A."/>
            <person name="Futter C."/>
            <person name="Mellor H."/>
        </authorList>
    </citation>
    <scope>FUNCTION</scope>
    <scope>SUBCELLULAR LOCATION</scope>
    <scope>MUTAGENESIS OF GLY-14</scope>
</reference>
<reference key="14">
    <citation type="journal article" date="1995" name="J. Histochem. Cytochem.">
        <title>Ultrastructural localization of ras-related proteins using epitope-tagged plasmids.</title>
        <authorList>
            <person name="Robertson D."/>
            <person name="Paterson H.F."/>
            <person name="Adamson P."/>
            <person name="Hall A."/>
            <person name="Monaghan P."/>
        </authorList>
    </citation>
    <scope>SUBCELLULAR LOCATION</scope>
</reference>
<reference key="15">
    <citation type="journal article" date="1992" name="J. Biol. Chem.">
        <title>Post-translational modifications of p21rho proteins.</title>
        <authorList>
            <person name="Adamson P."/>
            <person name="Marshall C.J."/>
            <person name="Hall A."/>
            <person name="Tilbrook P.A."/>
        </authorList>
    </citation>
    <scope>PALMITOYLATION AT CYS-189 AND CYS-192</scope>
    <scope>ISOPRENYLATION AT CYS-193</scope>
    <scope>METHYLATION AT CYS-193</scope>
    <scope>MUTAGENESIS OF CYS-189; CYS-192; CYS-193 AND LYS-194</scope>
</reference>
<reference key="16">
    <citation type="journal article" date="1995" name="J. Biol. Chem.">
        <title>CAAX geranylgeranyl transferase transfers farnesyl as efficiently as geranylgeranyl to RhoB.</title>
        <authorList>
            <person name="Armstrong S.A."/>
            <person name="Hannah V.C."/>
            <person name="Goldstein J.L."/>
            <person name="Brown M.S."/>
        </authorList>
    </citation>
    <scope>ISOPRENYLATION AT CYS-193</scope>
    <scope>MUTAGENESIS OF CYS-192 AND CYS-193</scope>
</reference>
<reference key="17">
    <citation type="journal article" date="2001" name="J. Biol. Chem.">
        <title>AKAP-Lbc anchors protein kinase A and nucleates Galpha 12-selective Rho-mediated stress fiber formation.</title>
        <authorList>
            <person name="Diviani D."/>
            <person name="Soderling J."/>
            <person name="Scott J.D."/>
        </authorList>
    </citation>
    <scope>INTERACTION WITH AKAP13</scope>
</reference>
<reference key="18">
    <citation type="journal article" date="2002" name="J. Biol. Chem.">
        <title>XPLN, a guanine nucleotide exchange factor for RhoA and RhoB, but not RhoC.</title>
        <authorList>
            <person name="Arthur W.T."/>
            <person name="Ellerbroek S.M."/>
            <person name="Der C.J."/>
            <person name="Burridge K."/>
            <person name="Wennerberg K."/>
        </authorList>
    </citation>
    <scope>INTERACTION WITH ARHGEF3</scope>
</reference>
<reference key="19">
    <citation type="journal article" date="2006" name="Mol. Biol. Cell">
        <title>Dissecting the role of Rho-mediated signaling in contractile ring formation.</title>
        <authorList>
            <person name="Kamijo K."/>
            <person name="Ohara N."/>
            <person name="Abe M."/>
            <person name="Uchimura T."/>
            <person name="Hosoya H."/>
            <person name="Lee J.S."/>
            <person name="Miki T."/>
        </authorList>
    </citation>
    <scope>FUNCTION</scope>
    <scope>SUBCELLULAR LOCATION</scope>
</reference>
<reference key="20">
    <citation type="journal article" date="2011" name="BMC Syst. Biol.">
        <title>Initial characterization of the human central proteome.</title>
        <authorList>
            <person name="Burkard T.R."/>
            <person name="Planyavsky M."/>
            <person name="Kaupe I."/>
            <person name="Breitwieser F.P."/>
            <person name="Buerckstuemmer T."/>
            <person name="Bennett K.L."/>
            <person name="Superti-Furga G."/>
            <person name="Colinge J."/>
        </authorList>
    </citation>
    <scope>IDENTIFICATION BY MASS SPECTROMETRY [LARGE SCALE ANALYSIS]</scope>
</reference>
<reference key="21">
    <citation type="journal article" date="2011" name="PLoS ONE">
        <title>The nuclear guanine nucleotide exchange factors Ect2 and Net1 regulate RhoB-mediated cell death after DNA damage.</title>
        <authorList>
            <person name="Srougi M.C."/>
            <person name="Burridge K."/>
        </authorList>
    </citation>
    <scope>FUNCTION</scope>
    <scope>INDUCTION</scope>
</reference>
<reference key="22">
    <citation type="journal article" date="2013" name="Nat. Struct. Mol. Biol.">
        <title>A bacterial toxin catalyzing tyrosine glycosylation of Rho and deamidation of Gq and Gi proteins.</title>
        <authorList>
            <person name="Jank T."/>
            <person name="Bogdanovic X."/>
            <person name="Wirth C."/>
            <person name="Haaf E."/>
            <person name="Spoerner M."/>
            <person name="Boehmer K.E."/>
            <person name="Steinemann M."/>
            <person name="Orth J.H."/>
            <person name="Kalbitzer H.R."/>
            <person name="Warscheid B."/>
            <person name="Hunte C."/>
            <person name="Aktories K."/>
        </authorList>
    </citation>
    <scope>GLYCOSYLATION AT TYR-34 (MICROBIAL INFECTION)</scope>
</reference>
<reference key="23">
    <citation type="journal article" date="2014" name="Cell. Microbiol.">
        <title>Haemorrhagic toxin and lethal toxin from Clostridium sordellii strain vpi9048: molecular characterization and comparative analysis of substrate specificity of the large clostridial glucosylating toxins.</title>
        <authorList>
            <person name="Genth H."/>
            <person name="Pauillac S."/>
            <person name="Schelle I."/>
            <person name="Bouvet P."/>
            <person name="Bouchier C."/>
            <person name="Varela-Chavez C."/>
            <person name="Just I."/>
            <person name="Popoff M.R."/>
        </authorList>
    </citation>
    <scope>GLYCOSYLATION AT THR-37 (MICROBIAL INFECTION)</scope>
</reference>
<reference key="24">
    <citation type="journal article" date="2016" name="J. Cell Sci.">
        <title>RHO binding to FAM65A regulates Golgi reorientation during cell migration.</title>
        <authorList>
            <person name="Mardakheh F.K."/>
            <person name="Self A."/>
            <person name="Marshall C.J."/>
        </authorList>
    </citation>
    <scope>INTERACTION WITH RIPOR1</scope>
</reference>
<name>RHOB_HUMAN</name>
<dbReference type="EMBL" id="X06820">
    <property type="protein sequence ID" value="CAA29968.1"/>
    <property type="molecule type" value="mRNA"/>
</dbReference>
<dbReference type="EMBL" id="AF498971">
    <property type="protein sequence ID" value="AAM21118.1"/>
    <property type="molecule type" value="mRNA"/>
</dbReference>
<dbReference type="EMBL" id="CR542272">
    <property type="protein sequence ID" value="CAG47068.1"/>
    <property type="molecule type" value="mRNA"/>
</dbReference>
<dbReference type="EMBL" id="AK124398">
    <property type="protein sequence ID" value="BAG54035.1"/>
    <property type="molecule type" value="mRNA"/>
</dbReference>
<dbReference type="EMBL" id="AK312487">
    <property type="protein sequence ID" value="BAG35389.1"/>
    <property type="molecule type" value="mRNA"/>
</dbReference>
<dbReference type="EMBL" id="BT019546">
    <property type="protein sequence ID" value="AAV38353.1"/>
    <property type="molecule type" value="mRNA"/>
</dbReference>
<dbReference type="EMBL" id="BT019547">
    <property type="protein sequence ID" value="AAV38354.1"/>
    <property type="molecule type" value="mRNA"/>
</dbReference>
<dbReference type="EMBL" id="AC023137">
    <property type="protein sequence ID" value="AAY24345.1"/>
    <property type="molecule type" value="Genomic_DNA"/>
</dbReference>
<dbReference type="EMBL" id="CH471053">
    <property type="protein sequence ID" value="EAX00819.1"/>
    <property type="molecule type" value="Genomic_DNA"/>
</dbReference>
<dbReference type="EMBL" id="CH471053">
    <property type="protein sequence ID" value="EAX00820.1"/>
    <property type="molecule type" value="Genomic_DNA"/>
</dbReference>
<dbReference type="EMBL" id="BC066954">
    <property type="protein sequence ID" value="AAH66954.1"/>
    <property type="molecule type" value="mRNA"/>
</dbReference>
<dbReference type="EMBL" id="M12174">
    <property type="protein sequence ID" value="AAA36565.1"/>
    <property type="molecule type" value="mRNA"/>
</dbReference>
<dbReference type="EMBL" id="BK001232">
    <property type="protein sequence ID" value="DAA01138.1"/>
    <property type="molecule type" value="mRNA"/>
</dbReference>
<dbReference type="EMBL" id="BK001671">
    <property type="protein sequence ID" value="DAA01912.1"/>
    <property type="molecule type" value="Genomic_DNA"/>
</dbReference>
<dbReference type="CCDS" id="CCDS1699.1"/>
<dbReference type="PIR" id="A01372">
    <property type="entry name" value="TVHURH"/>
</dbReference>
<dbReference type="RefSeq" id="NP_004031.1">
    <property type="nucleotide sequence ID" value="NM_004040.4"/>
</dbReference>
<dbReference type="PDB" id="2FV8">
    <property type="method" value="X-ray"/>
    <property type="resolution" value="1.90 A"/>
    <property type="chains" value="A=4-187"/>
</dbReference>
<dbReference type="PDB" id="6HXU">
    <property type="method" value="X-ray"/>
    <property type="resolution" value="1.19 A"/>
    <property type="chains" value="A=1-183"/>
</dbReference>
<dbReference type="PDB" id="6SGE">
    <property type="method" value="X-ray"/>
    <property type="resolution" value="1.50 A"/>
    <property type="chains" value="A/C=1-183"/>
</dbReference>
<dbReference type="PDBsum" id="2FV8"/>
<dbReference type="PDBsum" id="6HXU"/>
<dbReference type="PDBsum" id="6SGE"/>
<dbReference type="SMR" id="P62745"/>
<dbReference type="BioGRID" id="106881">
    <property type="interactions" value="841"/>
</dbReference>
<dbReference type="CORUM" id="P62745"/>
<dbReference type="FunCoup" id="P62745">
    <property type="interactions" value="880"/>
</dbReference>
<dbReference type="IntAct" id="P62745">
    <property type="interactions" value="40"/>
</dbReference>
<dbReference type="MINT" id="P62745"/>
<dbReference type="STRING" id="9606.ENSP00000272233"/>
<dbReference type="ChEMBL" id="CHEMBL1795102"/>
<dbReference type="DrugBank" id="DB00083">
    <property type="generic name" value="Botulinum toxin type A"/>
</dbReference>
<dbReference type="GlyCosmos" id="P62745">
    <property type="glycosylation" value="2 sites, No reported glycans"/>
</dbReference>
<dbReference type="GlyGen" id="P62745">
    <property type="glycosylation" value="3 sites"/>
</dbReference>
<dbReference type="iPTMnet" id="P62745"/>
<dbReference type="PhosphoSitePlus" id="P62745"/>
<dbReference type="SwissPalm" id="P62745"/>
<dbReference type="BioMuta" id="RHOB"/>
<dbReference type="DMDM" id="51338601"/>
<dbReference type="jPOST" id="P62745"/>
<dbReference type="MassIVE" id="P62745"/>
<dbReference type="PaxDb" id="9606-ENSP00000272233"/>
<dbReference type="PeptideAtlas" id="P62745"/>
<dbReference type="ProteomicsDB" id="57420"/>
<dbReference type="Pumba" id="P62745"/>
<dbReference type="TopDownProteomics" id="P62745"/>
<dbReference type="ABCD" id="P62745">
    <property type="antibodies" value="22 sequenced antibodies"/>
</dbReference>
<dbReference type="Antibodypedia" id="3879">
    <property type="antibodies" value="242 antibodies from 34 providers"/>
</dbReference>
<dbReference type="DNASU" id="388"/>
<dbReference type="Ensembl" id="ENST00000272233.6">
    <property type="protein sequence ID" value="ENSP00000272233.4"/>
    <property type="gene ID" value="ENSG00000143878.10"/>
</dbReference>
<dbReference type="GeneID" id="388"/>
<dbReference type="KEGG" id="hsa:388"/>
<dbReference type="MANE-Select" id="ENST00000272233.6">
    <property type="protein sequence ID" value="ENSP00000272233.4"/>
    <property type="RefSeq nucleotide sequence ID" value="NM_004040.4"/>
    <property type="RefSeq protein sequence ID" value="NP_004031.1"/>
</dbReference>
<dbReference type="UCSC" id="uc002rdv.4">
    <property type="organism name" value="human"/>
</dbReference>
<dbReference type="AGR" id="HGNC:668"/>
<dbReference type="CTD" id="388"/>
<dbReference type="DisGeNET" id="388"/>
<dbReference type="GeneCards" id="RHOB"/>
<dbReference type="HGNC" id="HGNC:668">
    <property type="gene designation" value="RHOB"/>
</dbReference>
<dbReference type="HPA" id="ENSG00000143878">
    <property type="expression patterns" value="Low tissue specificity"/>
</dbReference>
<dbReference type="MIM" id="165370">
    <property type="type" value="gene"/>
</dbReference>
<dbReference type="neXtProt" id="NX_P62745"/>
<dbReference type="OpenTargets" id="ENSG00000143878"/>
<dbReference type="PharmGKB" id="PA24950"/>
<dbReference type="VEuPathDB" id="HostDB:ENSG00000143878"/>
<dbReference type="eggNOG" id="KOG0393">
    <property type="taxonomic scope" value="Eukaryota"/>
</dbReference>
<dbReference type="GeneTree" id="ENSGT00950000182945"/>
<dbReference type="HOGENOM" id="CLU_041217_21_2_1"/>
<dbReference type="InParanoid" id="P62745"/>
<dbReference type="OMA" id="ENVYTKW"/>
<dbReference type="OrthoDB" id="8830751at2759"/>
<dbReference type="PAN-GO" id="P62745">
    <property type="GO annotations" value="14 GO annotations based on evolutionary models"/>
</dbReference>
<dbReference type="PhylomeDB" id="P62745"/>
<dbReference type="TreeFam" id="TF300837"/>
<dbReference type="BRENDA" id="3.6.5.2">
    <property type="organism ID" value="2681"/>
</dbReference>
<dbReference type="PathwayCommons" id="P62745"/>
<dbReference type="Reactome" id="R-HSA-114604">
    <property type="pathway name" value="GPVI-mediated activation cascade"/>
</dbReference>
<dbReference type="Reactome" id="R-HSA-416482">
    <property type="pathway name" value="G alpha (12/13) signalling events"/>
</dbReference>
<dbReference type="Reactome" id="R-HSA-416572">
    <property type="pathway name" value="Sema4D induced cell migration and growth-cone collapse"/>
</dbReference>
<dbReference type="Reactome" id="R-HSA-5625740">
    <property type="pathway name" value="RHO GTPases activate PKNs"/>
</dbReference>
<dbReference type="Reactome" id="R-HSA-5625900">
    <property type="pathway name" value="RHO GTPases activate CIT"/>
</dbReference>
<dbReference type="Reactome" id="R-HSA-5627117">
    <property type="pathway name" value="RHO GTPases Activate ROCKs"/>
</dbReference>
<dbReference type="Reactome" id="R-HSA-5663220">
    <property type="pathway name" value="RHO GTPases Activate Formins"/>
</dbReference>
<dbReference type="Reactome" id="R-HSA-5666185">
    <property type="pathway name" value="RHO GTPases Activate Rhotekin and Rhophilins"/>
</dbReference>
<dbReference type="Reactome" id="R-HSA-9013026">
    <property type="pathway name" value="RHOB GTPase cycle"/>
</dbReference>
<dbReference type="SignaLink" id="P62745"/>
<dbReference type="SIGNOR" id="P62745"/>
<dbReference type="BioGRID-ORCS" id="388">
    <property type="hits" value="11 hits in 1144 CRISPR screens"/>
</dbReference>
<dbReference type="CD-CODE" id="FB4E32DD">
    <property type="entry name" value="Presynaptic clusters and postsynaptic densities"/>
</dbReference>
<dbReference type="ChiTaRS" id="RHOB">
    <property type="organism name" value="human"/>
</dbReference>
<dbReference type="EvolutionaryTrace" id="P62745"/>
<dbReference type="GeneWiki" id="RHOB"/>
<dbReference type="GenomeRNAi" id="388"/>
<dbReference type="Pharos" id="P62745">
    <property type="development level" value="Tbio"/>
</dbReference>
<dbReference type="PRO" id="PR:P62745"/>
<dbReference type="Proteomes" id="UP000005640">
    <property type="component" value="Chromosome 2"/>
</dbReference>
<dbReference type="RNAct" id="P62745">
    <property type="molecule type" value="protein"/>
</dbReference>
<dbReference type="Bgee" id="ENSG00000143878">
    <property type="expression patterns" value="Expressed in mucosa of stomach and 211 other cell types or tissues"/>
</dbReference>
<dbReference type="GO" id="GO:0032154">
    <property type="term" value="C:cleavage furrow"/>
    <property type="evidence" value="ECO:0000314"/>
    <property type="project" value="UniProtKB"/>
</dbReference>
<dbReference type="GO" id="GO:0005829">
    <property type="term" value="C:cytosol"/>
    <property type="evidence" value="ECO:0000304"/>
    <property type="project" value="Reactome"/>
</dbReference>
<dbReference type="GO" id="GO:0005769">
    <property type="term" value="C:early endosome"/>
    <property type="evidence" value="ECO:0007669"/>
    <property type="project" value="Ensembl"/>
</dbReference>
<dbReference type="GO" id="GO:0010008">
    <property type="term" value="C:endosome membrane"/>
    <property type="evidence" value="ECO:0000314"/>
    <property type="project" value="UniProtKB"/>
</dbReference>
<dbReference type="GO" id="GO:0070062">
    <property type="term" value="C:extracellular exosome"/>
    <property type="evidence" value="ECO:0007005"/>
    <property type="project" value="UniProtKB"/>
</dbReference>
<dbReference type="GO" id="GO:0005925">
    <property type="term" value="C:focal adhesion"/>
    <property type="evidence" value="ECO:0007005"/>
    <property type="project" value="UniProtKB"/>
</dbReference>
<dbReference type="GO" id="GO:0031902">
    <property type="term" value="C:late endosome membrane"/>
    <property type="evidence" value="ECO:0007669"/>
    <property type="project" value="UniProtKB-SubCell"/>
</dbReference>
<dbReference type="GO" id="GO:0005634">
    <property type="term" value="C:nucleus"/>
    <property type="evidence" value="ECO:0000250"/>
    <property type="project" value="UniProtKB"/>
</dbReference>
<dbReference type="GO" id="GO:0005886">
    <property type="term" value="C:plasma membrane"/>
    <property type="evidence" value="ECO:0000314"/>
    <property type="project" value="UniProtKB"/>
</dbReference>
<dbReference type="GO" id="GO:0098685">
    <property type="term" value="C:Schaffer collateral - CA1 synapse"/>
    <property type="evidence" value="ECO:0007669"/>
    <property type="project" value="Ensembl"/>
</dbReference>
<dbReference type="GO" id="GO:0019003">
    <property type="term" value="F:GDP binding"/>
    <property type="evidence" value="ECO:0007669"/>
    <property type="project" value="Ensembl"/>
</dbReference>
<dbReference type="GO" id="GO:0005525">
    <property type="term" value="F:GTP binding"/>
    <property type="evidence" value="ECO:0000318"/>
    <property type="project" value="GO_Central"/>
</dbReference>
<dbReference type="GO" id="GO:0003924">
    <property type="term" value="F:GTPase activity"/>
    <property type="evidence" value="ECO:0000318"/>
    <property type="project" value="GO_Central"/>
</dbReference>
<dbReference type="GO" id="GO:0007015">
    <property type="term" value="P:actin filament organization"/>
    <property type="evidence" value="ECO:0000318"/>
    <property type="project" value="GO_Central"/>
</dbReference>
<dbReference type="GO" id="GO:0001525">
    <property type="term" value="P:angiogenesis"/>
    <property type="evidence" value="ECO:0007669"/>
    <property type="project" value="UniProtKB-KW"/>
</dbReference>
<dbReference type="GO" id="GO:0006915">
    <property type="term" value="P:apoptotic process"/>
    <property type="evidence" value="ECO:0000304"/>
    <property type="project" value="UniProtKB"/>
</dbReference>
<dbReference type="GO" id="GO:0007155">
    <property type="term" value="P:cell adhesion"/>
    <property type="evidence" value="ECO:0000250"/>
    <property type="project" value="UniProtKB"/>
</dbReference>
<dbReference type="GO" id="GO:0030154">
    <property type="term" value="P:cell differentiation"/>
    <property type="evidence" value="ECO:0007669"/>
    <property type="project" value="UniProtKB-KW"/>
</dbReference>
<dbReference type="GO" id="GO:0070301">
    <property type="term" value="P:cellular response to hydrogen peroxide"/>
    <property type="evidence" value="ECO:0000314"/>
    <property type="project" value="UniProtKB"/>
</dbReference>
<dbReference type="GO" id="GO:0071479">
    <property type="term" value="P:cellular response to ionizing radiation"/>
    <property type="evidence" value="ECO:0000314"/>
    <property type="project" value="UniProtKB"/>
</dbReference>
<dbReference type="GO" id="GO:0008333">
    <property type="term" value="P:endosome to lysosome transport"/>
    <property type="evidence" value="ECO:0000314"/>
    <property type="project" value="UniProtKB"/>
</dbReference>
<dbReference type="GO" id="GO:0061154">
    <property type="term" value="P:endothelial tube morphogenesis"/>
    <property type="evidence" value="ECO:0000315"/>
    <property type="project" value="BHF-UCL"/>
</dbReference>
<dbReference type="GO" id="GO:0006886">
    <property type="term" value="P:intracellular protein transport"/>
    <property type="evidence" value="ECO:0007669"/>
    <property type="project" value="Ensembl"/>
</dbReference>
<dbReference type="GO" id="GO:0000281">
    <property type="term" value="P:mitotic cytokinesis"/>
    <property type="evidence" value="ECO:0000315"/>
    <property type="project" value="UniProtKB"/>
</dbReference>
<dbReference type="GO" id="GO:0045786">
    <property type="term" value="P:negative regulation of cell cycle"/>
    <property type="evidence" value="ECO:0000250"/>
    <property type="project" value="UniProtKB"/>
</dbReference>
<dbReference type="GO" id="GO:0030336">
    <property type="term" value="P:negative regulation of cell migration"/>
    <property type="evidence" value="ECO:0000314"/>
    <property type="project" value="BHF-UCL"/>
</dbReference>
<dbReference type="GO" id="GO:0045766">
    <property type="term" value="P:positive regulation of angiogenesis"/>
    <property type="evidence" value="ECO:0000250"/>
    <property type="project" value="UniProtKB"/>
</dbReference>
<dbReference type="GO" id="GO:0043065">
    <property type="term" value="P:positive regulation of apoptotic process"/>
    <property type="evidence" value="ECO:0000315"/>
    <property type="project" value="UniProtKB"/>
</dbReference>
<dbReference type="GO" id="GO:0010595">
    <property type="term" value="P:positive regulation of endothelial cell migration"/>
    <property type="evidence" value="ECO:0000315"/>
    <property type="project" value="BHF-UCL"/>
</dbReference>
<dbReference type="GO" id="GO:0030334">
    <property type="term" value="P:regulation of cell migration"/>
    <property type="evidence" value="ECO:0000316"/>
    <property type="project" value="BHF-UCL"/>
</dbReference>
<dbReference type="GO" id="GO:0099159">
    <property type="term" value="P:regulation of modification of postsynaptic structure"/>
    <property type="evidence" value="ECO:0007669"/>
    <property type="project" value="Ensembl"/>
</dbReference>
<dbReference type="GO" id="GO:0007266">
    <property type="term" value="P:Rho protein signal transduction"/>
    <property type="evidence" value="ECO:0000304"/>
    <property type="project" value="UniProtKB"/>
</dbReference>
<dbReference type="GO" id="GO:0007165">
    <property type="term" value="P:signal transduction"/>
    <property type="evidence" value="ECO:0000318"/>
    <property type="project" value="GO_Central"/>
</dbReference>
<dbReference type="CDD" id="cd01870">
    <property type="entry name" value="RhoA_like"/>
    <property type="match status" value="1"/>
</dbReference>
<dbReference type="FunFam" id="3.40.50.300:FF:000095">
    <property type="entry name" value="Rho-related GTP-binding protein RhoC"/>
    <property type="match status" value="1"/>
</dbReference>
<dbReference type="Gene3D" id="3.40.50.300">
    <property type="entry name" value="P-loop containing nucleotide triphosphate hydrolases"/>
    <property type="match status" value="1"/>
</dbReference>
<dbReference type="InterPro" id="IPR027417">
    <property type="entry name" value="P-loop_NTPase"/>
</dbReference>
<dbReference type="InterPro" id="IPR005225">
    <property type="entry name" value="Small_GTP-bd"/>
</dbReference>
<dbReference type="InterPro" id="IPR001806">
    <property type="entry name" value="Small_GTPase"/>
</dbReference>
<dbReference type="InterPro" id="IPR003578">
    <property type="entry name" value="Small_GTPase_Rho"/>
</dbReference>
<dbReference type="NCBIfam" id="TIGR00231">
    <property type="entry name" value="small_GTP"/>
    <property type="match status" value="1"/>
</dbReference>
<dbReference type="PANTHER" id="PTHR24072">
    <property type="entry name" value="RHO FAMILY GTPASE"/>
    <property type="match status" value="1"/>
</dbReference>
<dbReference type="Pfam" id="PF00071">
    <property type="entry name" value="Ras"/>
    <property type="match status" value="1"/>
</dbReference>
<dbReference type="PRINTS" id="PR00449">
    <property type="entry name" value="RASTRNSFRMNG"/>
</dbReference>
<dbReference type="SMART" id="SM00175">
    <property type="entry name" value="RAB"/>
    <property type="match status" value="1"/>
</dbReference>
<dbReference type="SMART" id="SM00173">
    <property type="entry name" value="RAS"/>
    <property type="match status" value="1"/>
</dbReference>
<dbReference type="SMART" id="SM00174">
    <property type="entry name" value="RHO"/>
    <property type="match status" value="1"/>
</dbReference>
<dbReference type="SUPFAM" id="SSF52540">
    <property type="entry name" value="P-loop containing nucleoside triphosphate hydrolases"/>
    <property type="match status" value="1"/>
</dbReference>
<dbReference type="PROSITE" id="PS51420">
    <property type="entry name" value="RHO"/>
    <property type="match status" value="1"/>
</dbReference>
<evidence type="ECO:0000250" key="1"/>
<evidence type="ECO:0000250" key="2">
    <source>
        <dbReference type="UniProtKB" id="P62746"/>
    </source>
</evidence>
<evidence type="ECO:0000250" key="3">
    <source>
        <dbReference type="UniProtKB" id="P62747"/>
    </source>
</evidence>
<evidence type="ECO:0000255" key="4"/>
<evidence type="ECO:0000269" key="5">
    <source>
    </source>
</evidence>
<evidence type="ECO:0000269" key="6">
    <source>
    </source>
</evidence>
<evidence type="ECO:0000269" key="7">
    <source>
    </source>
</evidence>
<evidence type="ECO:0000269" key="8">
    <source>
    </source>
</evidence>
<evidence type="ECO:0000269" key="9">
    <source>
    </source>
</evidence>
<evidence type="ECO:0000269" key="10">
    <source>
    </source>
</evidence>
<evidence type="ECO:0000269" key="11">
    <source>
    </source>
</evidence>
<evidence type="ECO:0000269" key="12">
    <source>
    </source>
</evidence>
<evidence type="ECO:0000269" key="13">
    <source>
    </source>
</evidence>
<evidence type="ECO:0000269" key="14">
    <source>
    </source>
</evidence>
<evidence type="ECO:0000269" key="15">
    <source>
    </source>
</evidence>
<evidence type="ECO:0000269" key="16">
    <source>
    </source>
</evidence>
<evidence type="ECO:0000305" key="17"/>
<evidence type="ECO:0007829" key="18">
    <source>
        <dbReference type="PDB" id="6HXU"/>
    </source>
</evidence>
<feature type="chain" id="PRO_0000030417" description="Rho-related GTP-binding protein RhoB">
    <location>
        <begin position="1"/>
        <end position="193"/>
    </location>
</feature>
<feature type="propeptide" id="PRO_0000030418" description="Removed in mature form">
    <location>
        <begin position="194"/>
        <end position="196"/>
    </location>
</feature>
<feature type="short sequence motif" description="Effector region" evidence="4">
    <location>
        <begin position="34"/>
        <end position="42"/>
    </location>
</feature>
<feature type="binding site" evidence="1">
    <location>
        <begin position="12"/>
        <end position="19"/>
    </location>
    <ligand>
        <name>GTP</name>
        <dbReference type="ChEBI" id="CHEBI:37565"/>
    </ligand>
</feature>
<feature type="binding site" evidence="1">
    <location>
        <begin position="59"/>
        <end position="63"/>
    </location>
    <ligand>
        <name>GTP</name>
        <dbReference type="ChEBI" id="CHEBI:37565"/>
    </ligand>
</feature>
<feature type="binding site" evidence="1">
    <location>
        <begin position="117"/>
        <end position="120"/>
    </location>
    <ligand>
        <name>GTP</name>
        <dbReference type="ChEBI" id="CHEBI:37565"/>
    </ligand>
</feature>
<feature type="modified residue" description="ADP-ribosylasparagine; by botulinum toxin" evidence="1">
    <location>
        <position position="41"/>
    </location>
</feature>
<feature type="modified residue" description="Phosphotyrosine" evidence="2">
    <location>
        <position position="154"/>
    </location>
</feature>
<feature type="modified residue" description="Cysteine methyl ester" evidence="8">
    <location>
        <position position="193"/>
    </location>
</feature>
<feature type="lipid moiety-binding region" description="S-palmitoyl cysteine" evidence="8">
    <location>
        <position position="189"/>
    </location>
</feature>
<feature type="lipid moiety-binding region" description="S-palmitoyl cysteine" evidence="8">
    <location>
        <position position="192"/>
    </location>
</feature>
<feature type="lipid moiety-binding region" description="S-farnesyl cysteine; in plasma membrane form" evidence="8 15">
    <location>
        <position position="193"/>
    </location>
</feature>
<feature type="lipid moiety-binding region" description="S-geranylgeranyl cysteine; in endosomal form" evidence="8 15">
    <location>
        <position position="193"/>
    </location>
</feature>
<feature type="glycosylation site" description="O-linked (GlcNAc) tyrosine; by Photorhabdus PAU_02230" evidence="12">
    <location>
        <position position="34"/>
    </location>
</feature>
<feature type="glycosylation site" description="(Microbial infection) O-linked (Glc) threonine; by C.difficile toxins TcdA and TcdB" evidence="13">
    <location>
        <position position="37"/>
    </location>
</feature>
<feature type="mutagenesis site" description="No effect on internalization of EGF receptor but decreases trafficking of receptor to the lysosome with associated accumulation in late endosomes." evidence="9">
    <original>G</original>
    <variation>V</variation>
    <location>
        <position position="14"/>
    </location>
</feature>
<feature type="mutagenesis site" description="Abolishes binding to PKN1 and trafficking of EGF receptor." evidence="5">
    <original>F</original>
    <variation>G</variation>
    <location>
        <position position="39"/>
    </location>
</feature>
<feature type="mutagenesis site" description="No effect on prenylation. Reduced palmitoylation. Abolishes palmitoylation; when associated with S-192." evidence="8">
    <original>C</original>
    <variation>S</variation>
    <location>
        <position position="189"/>
    </location>
</feature>
<feature type="mutagenesis site" description="Reduced geranylgeranylation but no effect on farnesylation. Reduced palmitoylation. Abolishes palmitoylation; when associated with S-189." evidence="8 15">
    <original>C</original>
    <variation>S</variation>
    <location>
        <position position="192"/>
    </location>
</feature>
<feature type="mutagenesis site" description="Abolishes methylation, palmitoylation and prenylation." evidence="8 15">
    <original>C</original>
    <variation>S</variation>
    <location>
        <position position="193"/>
    </location>
</feature>
<feature type="mutagenesis site" description="No effect on palmitoylation or prenylation." evidence="8">
    <original>K</original>
    <variation>L</variation>
    <location>
        <position position="194"/>
    </location>
</feature>
<feature type="strand" evidence="18">
    <location>
        <begin position="4"/>
        <end position="13"/>
    </location>
</feature>
<feature type="helix" evidence="18">
    <location>
        <begin position="18"/>
        <end position="27"/>
    </location>
</feature>
<feature type="strand" evidence="18">
    <location>
        <begin position="38"/>
        <end position="48"/>
    </location>
</feature>
<feature type="strand" evidence="18">
    <location>
        <begin position="51"/>
        <end position="60"/>
    </location>
</feature>
<feature type="helix" evidence="18">
    <location>
        <begin position="64"/>
        <end position="66"/>
    </location>
</feature>
<feature type="turn" evidence="18">
    <location>
        <begin position="67"/>
        <end position="69"/>
    </location>
</feature>
<feature type="helix" evidence="18">
    <location>
        <begin position="70"/>
        <end position="73"/>
    </location>
</feature>
<feature type="strand" evidence="18">
    <location>
        <begin position="78"/>
        <end position="85"/>
    </location>
</feature>
<feature type="helix" evidence="18">
    <location>
        <begin position="89"/>
        <end position="97"/>
    </location>
</feature>
<feature type="helix" evidence="18">
    <location>
        <begin position="99"/>
        <end position="106"/>
    </location>
</feature>
<feature type="strand" evidence="18">
    <location>
        <begin position="112"/>
        <end position="117"/>
    </location>
</feature>
<feature type="helix" evidence="18">
    <location>
        <begin position="119"/>
        <end position="121"/>
    </location>
</feature>
<feature type="helix" evidence="18">
    <location>
        <begin position="125"/>
        <end position="133"/>
    </location>
</feature>
<feature type="helix" evidence="18">
    <location>
        <begin position="141"/>
        <end position="150"/>
    </location>
</feature>
<feature type="strand" evidence="18">
    <location>
        <begin position="154"/>
        <end position="158"/>
    </location>
</feature>
<feature type="turn" evidence="18">
    <location>
        <begin position="161"/>
        <end position="163"/>
    </location>
</feature>
<feature type="helix" evidence="18">
    <location>
        <begin position="167"/>
        <end position="179"/>
    </location>
</feature>
<organism>
    <name type="scientific">Homo sapiens</name>
    <name type="common">Human</name>
    <dbReference type="NCBI Taxonomy" id="9606"/>
    <lineage>
        <taxon>Eukaryota</taxon>
        <taxon>Metazoa</taxon>
        <taxon>Chordata</taxon>
        <taxon>Craniata</taxon>
        <taxon>Vertebrata</taxon>
        <taxon>Euteleostomi</taxon>
        <taxon>Mammalia</taxon>
        <taxon>Eutheria</taxon>
        <taxon>Euarchontoglires</taxon>
        <taxon>Primates</taxon>
        <taxon>Haplorrhini</taxon>
        <taxon>Catarrhini</taxon>
        <taxon>Hominidae</taxon>
        <taxon>Homo</taxon>
    </lineage>
</organism>